<accession>A0A3T0QHS4</accession>
<protein>
    <recommendedName>
        <fullName evidence="3">Varicidin biosynthesis cluster-specific transcription factor</fullName>
    </recommendedName>
</protein>
<proteinExistence type="evidence at protein level"/>
<evidence type="ECO:0000255" key="1">
    <source>
        <dbReference type="PROSITE-ProRule" id="PRU00227"/>
    </source>
</evidence>
<evidence type="ECO:0000256" key="2">
    <source>
        <dbReference type="SAM" id="MobiDB-lite"/>
    </source>
</evidence>
<evidence type="ECO:0000303" key="3">
    <source>
    </source>
</evidence>
<evidence type="ECO:0000305" key="4">
    <source>
    </source>
</evidence>
<dbReference type="EMBL" id="MK376933">
    <property type="protein sequence ID" value="AZZ09614.1"/>
    <property type="molecule type" value="Genomic_DNA"/>
</dbReference>
<dbReference type="SMR" id="A0A3T0QHS4"/>
<dbReference type="GO" id="GO:0005634">
    <property type="term" value="C:nucleus"/>
    <property type="evidence" value="ECO:0007669"/>
    <property type="project" value="UniProtKB-SubCell"/>
</dbReference>
<dbReference type="GO" id="GO:0003677">
    <property type="term" value="F:DNA binding"/>
    <property type="evidence" value="ECO:0007669"/>
    <property type="project" value="UniProtKB-KW"/>
</dbReference>
<dbReference type="GO" id="GO:0000981">
    <property type="term" value="F:DNA-binding transcription factor activity, RNA polymerase II-specific"/>
    <property type="evidence" value="ECO:0007669"/>
    <property type="project" value="InterPro"/>
</dbReference>
<dbReference type="GO" id="GO:0008270">
    <property type="term" value="F:zinc ion binding"/>
    <property type="evidence" value="ECO:0007669"/>
    <property type="project" value="InterPro"/>
</dbReference>
<dbReference type="CDD" id="cd00067">
    <property type="entry name" value="GAL4"/>
    <property type="match status" value="1"/>
</dbReference>
<dbReference type="Gene3D" id="4.10.240.10">
    <property type="entry name" value="Zn(2)-C6 fungal-type DNA-binding domain"/>
    <property type="match status" value="1"/>
</dbReference>
<dbReference type="InterPro" id="IPR036864">
    <property type="entry name" value="Zn2-C6_fun-type_DNA-bd_sf"/>
</dbReference>
<dbReference type="InterPro" id="IPR001138">
    <property type="entry name" value="Zn2Cys6_DnaBD"/>
</dbReference>
<dbReference type="SMART" id="SM00066">
    <property type="entry name" value="GAL4"/>
    <property type="match status" value="1"/>
</dbReference>
<dbReference type="SUPFAM" id="SSF57701">
    <property type="entry name" value="Zn2/Cys6 DNA-binding domain"/>
    <property type="match status" value="1"/>
</dbReference>
<dbReference type="PROSITE" id="PS50048">
    <property type="entry name" value="ZN2_CY6_FUNGAL_2"/>
    <property type="match status" value="1"/>
</dbReference>
<name>PVHR_TALVA</name>
<reference key="1">
    <citation type="journal article" date="2019" name="J. Am. Chem. Soc.">
        <title>Genome-mined Diels-Alderase catalyzes formation of the cis-octahydrodecalins of varicidin A and B.</title>
        <authorList>
            <person name="Tan D."/>
            <person name="Jamieson C.S."/>
            <person name="Ohashi M."/>
            <person name="Tang M.C."/>
            <person name="Houk K.N."/>
            <person name="Tang Y."/>
        </authorList>
    </citation>
    <scope>NUCLEOTIDE SEQUENCE [GENOMIC DNA]</scope>
    <scope>FUNCTION</scope>
    <scope>CATALYTIC ACTIVITY</scope>
    <scope>PATHWAY</scope>
    <source>
        <strain>HXQ-H-1</strain>
    </source>
</reference>
<sequence>MPSSPGNRQHSLRSACERCRLHKLKCTILPQKRFEGPQEAPEQCTRCARAKAKCVFGRRAPPKHRASSSNDRSSVSKGINSTTPATRTMQPNATGFVSSHRIELPPSPASNQSSLKHSSVWDNLLDKTTPQEPRADFSSFSYPPVPFDLQSMCLDEVDMAASALPTTEPNFSSAQREHEFSAMSMSPGLGYDNLDELLALNEQPNISDASSPLLSETDPSHGMIRLSSLLKEIHETQHNLQERSFSCTTSRGLAGYPIGRVLHAAQTFSSMVTNLMRPRVVQTSHTDVQGFNPSLYSSSPESTELPSLHQEFVSSLEQMKTNALEQSRRLGEDDLDKYASPCSSTTSLQDTMLDMPIVMLVFCCFASLSKLYCSVFRFFEKSLHSQSCRAKDSTYVPPLQDTRTLQLGELSIENDTEFKVLKALRMLLDAFQAAEASLGLPSSLTVLNSNKSTISASAEPAVSDTGSLQHHLRHSLIKQCVTFDDRHLERTLTSLVTHVENLKQLLRVQNGLH</sequence>
<gene>
    <name evidence="3" type="primary">TF</name>
</gene>
<organism>
    <name type="scientific">Talaromyces variabilis</name>
    <name type="common">Penicillium variabile</name>
    <dbReference type="NCBI Taxonomy" id="28576"/>
    <lineage>
        <taxon>Eukaryota</taxon>
        <taxon>Fungi</taxon>
        <taxon>Dikarya</taxon>
        <taxon>Ascomycota</taxon>
        <taxon>Pezizomycotina</taxon>
        <taxon>Eurotiomycetes</taxon>
        <taxon>Eurotiomycetidae</taxon>
        <taxon>Eurotiales</taxon>
        <taxon>Trichocomaceae</taxon>
        <taxon>Talaromyces</taxon>
    </lineage>
</organism>
<comment type="function">
    <text evidence="4">Transcription factor that regulates the expression of the gene cluster that mediates the biosynthesis of varicidin A, an antifungal natural product containing a cis-octahydrodecalin core.</text>
</comment>
<comment type="subcellular location">
    <subcellularLocation>
        <location evidence="1">Nucleus</location>
    </subcellularLocation>
</comment>
<keyword id="KW-0238">DNA-binding</keyword>
<keyword id="KW-0479">Metal-binding</keyword>
<keyword id="KW-0539">Nucleus</keyword>
<keyword id="KW-0804">Transcription</keyword>
<keyword id="KW-0805">Transcription regulation</keyword>
<keyword id="KW-0862">Zinc</keyword>
<feature type="chain" id="PRO_0000453352" description="Varicidin biosynthesis cluster-specific transcription factor">
    <location>
        <begin position="1"/>
        <end position="513"/>
    </location>
</feature>
<feature type="DNA-binding region" description="Zn(2)-C6 fungal-type" evidence="1">
    <location>
        <begin position="16"/>
        <end position="54"/>
    </location>
</feature>
<feature type="region of interest" description="Disordered" evidence="2">
    <location>
        <begin position="58"/>
        <end position="92"/>
    </location>
</feature>
<feature type="region of interest" description="Disordered" evidence="2">
    <location>
        <begin position="97"/>
        <end position="116"/>
    </location>
</feature>
<feature type="compositionally biased region" description="Low complexity" evidence="2">
    <location>
        <begin position="67"/>
        <end position="76"/>
    </location>
</feature>
<feature type="compositionally biased region" description="Polar residues" evidence="2">
    <location>
        <begin position="77"/>
        <end position="92"/>
    </location>
</feature>